<name>NS1_INBAD</name>
<keyword id="KW-0025">Alternative splicing</keyword>
<keyword id="KW-1035">Host cytoplasm</keyword>
<keyword id="KW-1048">Host nucleus</keyword>
<keyword id="KW-0945">Host-virus interaction</keyword>
<keyword id="KW-1090">Inhibition of host innate immune response by virus</keyword>
<keyword id="KW-1114">Inhibition of host interferon signaling pathway by virus</keyword>
<keyword id="KW-1095">Inhibition of host ISG15 by virus</keyword>
<keyword id="KW-1102">Inhibition of host PKR by virus</keyword>
<keyword id="KW-0922">Interferon antiviral system evasion</keyword>
<keyword id="KW-0694">RNA-binding</keyword>
<keyword id="KW-0899">Viral immunoevasion</keyword>
<organism>
    <name type="scientific">Influenza B virus (strain B/Ann Arbor/1/1966 [wild-type])</name>
    <dbReference type="NCBI Taxonomy" id="11523"/>
    <lineage>
        <taxon>Viruses</taxon>
        <taxon>Riboviria</taxon>
        <taxon>Orthornavirae</taxon>
        <taxon>Negarnaviricota</taxon>
        <taxon>Polyploviricotina</taxon>
        <taxon>Insthoviricetes</taxon>
        <taxon>Articulavirales</taxon>
        <taxon>Orthomyxoviridae</taxon>
        <taxon>Betainfluenzavirus</taxon>
        <taxon>Betainfluenzavirus influenzae</taxon>
        <taxon>Influenza B virus</taxon>
    </lineage>
</organism>
<organismHost>
    <name type="scientific">Homo sapiens</name>
    <name type="common">Human</name>
    <dbReference type="NCBI Taxonomy" id="9606"/>
</organismHost>
<proteinExistence type="inferred from homology"/>
<feature type="chain" id="PRO_0000078958" description="Non-structural protein 1">
    <location>
        <begin position="1"/>
        <end position="281"/>
    </location>
</feature>
<feature type="region of interest" description="G1P2-binding">
    <location>
        <begin position="1"/>
        <end position="103"/>
    </location>
</feature>
<feature type="region of interest" description="RNA-binding and homodimerization" evidence="1">
    <location>
        <begin position="1"/>
        <end position="93"/>
    </location>
</feature>
<feature type="short sequence motif" description="Nuclear localization signal" evidence="1">
    <location>
        <begin position="50"/>
        <end position="55"/>
    </location>
</feature>
<protein>
    <recommendedName>
        <fullName evidence="1">Non-structural protein 1</fullName>
        <shortName evidence="1">NS1</shortName>
    </recommendedName>
    <alternativeName>
        <fullName evidence="1">NS1A</fullName>
    </alternativeName>
</protein>
<dbReference type="EMBL" id="M20225">
    <property type="protein sequence ID" value="AAA43759.1"/>
    <property type="molecule type" value="Genomic_RNA"/>
</dbReference>
<dbReference type="SMR" id="P69254"/>
<dbReference type="GO" id="GO:0030430">
    <property type="term" value="C:host cell cytoplasm"/>
    <property type="evidence" value="ECO:0007669"/>
    <property type="project" value="UniProtKB-SubCell"/>
</dbReference>
<dbReference type="GO" id="GO:0042025">
    <property type="term" value="C:host cell nucleus"/>
    <property type="evidence" value="ECO:0007669"/>
    <property type="project" value="UniProtKB-SubCell"/>
</dbReference>
<dbReference type="GO" id="GO:0030291">
    <property type="term" value="F:protein serine/threonine kinase inhibitor activity"/>
    <property type="evidence" value="ECO:0007669"/>
    <property type="project" value="UniProtKB-KW"/>
</dbReference>
<dbReference type="GO" id="GO:0003723">
    <property type="term" value="F:RNA binding"/>
    <property type="evidence" value="ECO:0007669"/>
    <property type="project" value="UniProtKB-KW"/>
</dbReference>
<dbReference type="GO" id="GO:0039579">
    <property type="term" value="P:symbiont-mediated suppression of host ISG15-protein conjugation"/>
    <property type="evidence" value="ECO:0007669"/>
    <property type="project" value="UniProtKB-KW"/>
</dbReference>
<dbReference type="GO" id="GO:0039580">
    <property type="term" value="P:symbiont-mediated suppression of host PKR/eIFalpha signaling"/>
    <property type="evidence" value="ECO:0007669"/>
    <property type="project" value="UniProtKB-KW"/>
</dbReference>
<dbReference type="GO" id="GO:0039502">
    <property type="term" value="P:symbiont-mediated suppression of host type I interferon-mediated signaling pathway"/>
    <property type="evidence" value="ECO:0007669"/>
    <property type="project" value="UniProtKB-KW"/>
</dbReference>
<dbReference type="Gene3D" id="1.10.287.10">
    <property type="entry name" value="S15/NS1, RNA-binding"/>
    <property type="match status" value="1"/>
</dbReference>
<dbReference type="HAMAP" id="MF_04066">
    <property type="entry name" value="INFV_NS1"/>
    <property type="match status" value="1"/>
</dbReference>
<dbReference type="InterPro" id="IPR004208">
    <property type="entry name" value="NS1"/>
</dbReference>
<dbReference type="InterPro" id="IPR009068">
    <property type="entry name" value="uS15_NS1_RNA-bd_sf"/>
</dbReference>
<dbReference type="Pfam" id="PF02942">
    <property type="entry name" value="Flu_B_NS1"/>
    <property type="match status" value="1"/>
</dbReference>
<dbReference type="PIRSF" id="PIRSF003938">
    <property type="entry name" value="Flu_B_NS1"/>
    <property type="match status" value="1"/>
</dbReference>
<dbReference type="SUPFAM" id="SSF47060">
    <property type="entry name" value="S15/NS1 RNA-binding domain"/>
    <property type="match status" value="1"/>
</dbReference>
<reference key="1">
    <citation type="journal article" date="1988" name="Virology">
        <title>Sequence comparison of wild-type and cold-adapted B/Ann Arbor/1/66 influenza virus genes.</title>
        <authorList>
            <person name="Deborde D.C."/>
            <person name="Donabedian A.M."/>
            <person name="Herlocher M.L."/>
            <person name="Naeve C.W."/>
            <person name="Maassab H.F."/>
        </authorList>
    </citation>
    <scope>NUCLEOTIDE SEQUENCE [GENOMIC RNA]</scope>
</reference>
<reference key="2">
    <citation type="journal article" date="2003" name="Virology">
        <title>Intracellular warfare between human influenza viruses and human cells: the roles of the viral NS1 protein.</title>
        <authorList>
            <person name="Krug R.M."/>
            <person name="Yuan W."/>
            <person name="Noah D.L."/>
            <person name="Latham A.G."/>
        </authorList>
    </citation>
    <scope>REVIEW</scope>
</reference>
<comment type="function">
    <text evidence="1">Binds and inhibits the conjugation of the ubiquitin-like G1P2/ISG15 protein to its target proteins. Since G1P2/ISG15 is an early antiviral protein, NS1 may inhibit the host antiviral response. Prevents EIF2AK2/PKR activation, either by binding double strand RNA or by interacting directly with EIF2AK2/PKR. Also binds poly(A) and U6 snRNA.</text>
</comment>
<comment type="subunit">
    <text evidence="1">Homodimer. Interacts with and inhibits human G1P2 conjugation by UBE1L.</text>
</comment>
<comment type="subcellular location">
    <subcellularLocation>
        <location evidence="1">Host cytoplasm</location>
    </subcellularLocation>
    <subcellularLocation>
        <location evidence="1">Host nucleus</location>
    </subcellularLocation>
</comment>
<comment type="alternative products">
    <event type="alternative splicing"/>
    <isoform>
        <id>P69254-1</id>
        <name>NS1</name>
        <sequence type="displayed"/>
    </isoform>
    <isoform>
        <id>P69254-2</id>
        <name>NEP</name>
        <name>NS2</name>
        <sequence type="not described"/>
    </isoform>
</comment>
<comment type="similarity">
    <text evidence="1">Belongs to the influenza B viruses NS1 family.</text>
</comment>
<evidence type="ECO:0000255" key="1">
    <source>
        <dbReference type="HAMAP-Rule" id="MF_04066"/>
    </source>
</evidence>
<accession>P69254</accession>
<accession>P13883</accession>
<gene>
    <name evidence="1" type="primary">NS</name>
</gene>
<sequence length="281" mass="31854">MADNMTTTQIEVGPGATNATINFEAGILECYERLSSQRALDYPGQDRLNRLKRKLESRIKTHNKSEPESKRMSLEERKAIGVKMMKVLLFMNPSAGIEGFEPYCMKNSSNSNCPNCNWTDYPPTPGKCLDDIEEEPENVDDPTEIVLRDMNNKDARQKIKEEVNTQKEGKFRLTIKRDIRNVLSLRVLVNGTFLKHPNGYKSLSTLHRLNAYDQSGRLVAKLVATDDLTVEDEEDGHRILNSLFERFNEGHSKPIRAAETAVGVLSQFGQEHRLSPEEGDN</sequence>